<dbReference type="EMBL" id="CP000577">
    <property type="protein sequence ID" value="ABN77799.1"/>
    <property type="molecule type" value="Genomic_DNA"/>
</dbReference>
<dbReference type="RefSeq" id="WP_009563084.1">
    <property type="nucleotide sequence ID" value="NC_009049.1"/>
</dbReference>
<dbReference type="SMR" id="A3PN83"/>
<dbReference type="KEGG" id="rsh:Rsph17029_2697"/>
<dbReference type="HOGENOM" id="CLU_079215_1_0_5"/>
<dbReference type="GO" id="GO:0005886">
    <property type="term" value="C:plasma membrane"/>
    <property type="evidence" value="ECO:0007669"/>
    <property type="project" value="UniProtKB-SubCell"/>
</dbReference>
<dbReference type="GO" id="GO:0045259">
    <property type="term" value="C:proton-transporting ATP synthase complex"/>
    <property type="evidence" value="ECO:0007669"/>
    <property type="project" value="UniProtKB-KW"/>
</dbReference>
<dbReference type="GO" id="GO:0046933">
    <property type="term" value="F:proton-transporting ATP synthase activity, rotational mechanism"/>
    <property type="evidence" value="ECO:0007669"/>
    <property type="project" value="UniProtKB-UniRule"/>
</dbReference>
<dbReference type="GO" id="GO:0046961">
    <property type="term" value="F:proton-transporting ATPase activity, rotational mechanism"/>
    <property type="evidence" value="ECO:0007669"/>
    <property type="project" value="TreeGrafter"/>
</dbReference>
<dbReference type="CDD" id="cd06503">
    <property type="entry name" value="ATP-synt_Fo_b"/>
    <property type="match status" value="1"/>
</dbReference>
<dbReference type="Gene3D" id="6.10.250.1580">
    <property type="match status" value="1"/>
</dbReference>
<dbReference type="HAMAP" id="MF_01398">
    <property type="entry name" value="ATP_synth_b_bprime"/>
    <property type="match status" value="1"/>
</dbReference>
<dbReference type="InterPro" id="IPR002146">
    <property type="entry name" value="ATP_synth_b/b'su_bac/chlpt"/>
</dbReference>
<dbReference type="InterPro" id="IPR050059">
    <property type="entry name" value="ATP_synthase_B_chain"/>
</dbReference>
<dbReference type="NCBIfam" id="NF009988">
    <property type="entry name" value="PRK13454.1"/>
    <property type="match status" value="1"/>
</dbReference>
<dbReference type="PANTHER" id="PTHR33445:SF1">
    <property type="entry name" value="ATP SYNTHASE SUBUNIT B"/>
    <property type="match status" value="1"/>
</dbReference>
<dbReference type="PANTHER" id="PTHR33445">
    <property type="entry name" value="ATP SYNTHASE SUBUNIT B', CHLOROPLASTIC"/>
    <property type="match status" value="1"/>
</dbReference>
<dbReference type="Pfam" id="PF00430">
    <property type="entry name" value="ATP-synt_B"/>
    <property type="match status" value="1"/>
</dbReference>
<protein>
    <recommendedName>
        <fullName>ATP synthase subunit b 2</fullName>
    </recommendedName>
    <alternativeName>
        <fullName>ATP synthase F(0) sector subunit b 2</fullName>
    </alternativeName>
    <alternativeName>
        <fullName>ATPase subunit I 2</fullName>
    </alternativeName>
    <alternativeName>
        <fullName>F-type ATPase subunit b 2</fullName>
        <shortName>F-ATPase subunit b 2</shortName>
    </alternativeName>
</protein>
<comment type="function">
    <text evidence="1">F(1)F(0) ATP synthase produces ATP from ADP in the presence of a proton or sodium gradient. F-type ATPases consist of two structural domains, F(1) containing the extramembraneous catalytic core and F(0) containing the membrane proton channel, linked together by a central stalk and a peripheral stalk. During catalysis, ATP synthesis in the catalytic domain of F(1) is coupled via a rotary mechanism of the central stalk subunits to proton translocation (By similarity).</text>
</comment>
<comment type="function">
    <text evidence="1">Component of the F(0) channel, it forms part of the peripheral stalk, linking F(1) to F(0). The b'-subunit is a diverged and duplicated form of b found in plants and photosynthetic bacteria (By similarity).</text>
</comment>
<comment type="subunit">
    <text evidence="1">F-type ATPases have 2 components, F(1) - the catalytic core - and F(0) - the membrane proton channel. F(1) has five subunits: alpha(3), beta(3), gamma(1), delta(1), epsilon(1). F(0) has three main subunits: a(1), b(2) and c(10-14). The alpha and beta chains form an alternating ring which encloses part of the gamma chain. F(1) is attached to F(0) by a central stalk formed by the gamma and epsilon chains, while a peripheral stalk is formed by the delta and b chains (By similarity).</text>
</comment>
<comment type="subcellular location">
    <subcellularLocation>
        <location evidence="1">Cell inner membrane</location>
        <topology evidence="1">Single-pass membrane protein</topology>
    </subcellularLocation>
</comment>
<comment type="similarity">
    <text evidence="3">Belongs to the ATPase B chain family.</text>
</comment>
<sequence length="180" mass="18754">METEVHEAAGAAGHAGQAVGMPQLNFDYWPNQIFWLLVTLVAIYFLLTRVALPRIGAVLAERRGTITNDLAAAEELKQKAVLAEKAYNEALAKARAEAQAIVAETRAAIQAELDEATAKADAEISAKSAESEARIAEIRAGALQSVSEVAKDTAEALVAALGGKSDAAAVDAAVAARMKG</sequence>
<proteinExistence type="inferred from homology"/>
<accession>A3PN83</accession>
<gene>
    <name type="primary">atpF2</name>
    <name type="synonym">atpG</name>
    <name type="ordered locus">Rsph17029_2697</name>
</gene>
<reference key="1">
    <citation type="submission" date="2007-02" db="EMBL/GenBank/DDBJ databases">
        <title>Complete sequence of chromosome 1 of Rhodobacter sphaeroides ATCC 17029.</title>
        <authorList>
            <person name="Copeland A."/>
            <person name="Lucas S."/>
            <person name="Lapidus A."/>
            <person name="Barry K."/>
            <person name="Detter J.C."/>
            <person name="Glavina del Rio T."/>
            <person name="Hammon N."/>
            <person name="Israni S."/>
            <person name="Dalin E."/>
            <person name="Tice H."/>
            <person name="Pitluck S."/>
            <person name="Kiss H."/>
            <person name="Brettin T."/>
            <person name="Bruce D."/>
            <person name="Han C."/>
            <person name="Tapia R."/>
            <person name="Gilna P."/>
            <person name="Schmutz J."/>
            <person name="Larimer F."/>
            <person name="Land M."/>
            <person name="Hauser L."/>
            <person name="Kyrpides N."/>
            <person name="Mikhailova N."/>
            <person name="Richardson P."/>
            <person name="Mackenzie C."/>
            <person name="Choudhary M."/>
            <person name="Donohue T.J."/>
            <person name="Kaplan S."/>
        </authorList>
    </citation>
    <scope>NUCLEOTIDE SEQUENCE [LARGE SCALE GENOMIC DNA]</scope>
    <source>
        <strain>ATCC 17029 / ATH 2.4.9</strain>
    </source>
</reference>
<name>ATPF2_CERS1</name>
<organism>
    <name type="scientific">Cereibacter sphaeroides (strain ATCC 17029 / ATH 2.4.9)</name>
    <name type="common">Rhodobacter sphaeroides</name>
    <dbReference type="NCBI Taxonomy" id="349101"/>
    <lineage>
        <taxon>Bacteria</taxon>
        <taxon>Pseudomonadati</taxon>
        <taxon>Pseudomonadota</taxon>
        <taxon>Alphaproteobacteria</taxon>
        <taxon>Rhodobacterales</taxon>
        <taxon>Paracoccaceae</taxon>
        <taxon>Cereibacter</taxon>
    </lineage>
</organism>
<feature type="chain" id="PRO_0000369038" description="ATP synthase subunit b 2">
    <location>
        <begin position="1"/>
        <end position="180"/>
    </location>
</feature>
<feature type="transmembrane region" description="Helical" evidence="2">
    <location>
        <begin position="33"/>
        <end position="53"/>
    </location>
</feature>
<keyword id="KW-0066">ATP synthesis</keyword>
<keyword id="KW-0997">Cell inner membrane</keyword>
<keyword id="KW-1003">Cell membrane</keyword>
<keyword id="KW-0138">CF(0)</keyword>
<keyword id="KW-0375">Hydrogen ion transport</keyword>
<keyword id="KW-0406">Ion transport</keyword>
<keyword id="KW-0472">Membrane</keyword>
<keyword id="KW-0812">Transmembrane</keyword>
<keyword id="KW-1133">Transmembrane helix</keyword>
<keyword id="KW-0813">Transport</keyword>
<evidence type="ECO:0000250" key="1"/>
<evidence type="ECO:0000255" key="2"/>
<evidence type="ECO:0000305" key="3"/>